<organism>
    <name type="scientific">Campylobacter fetus subsp. fetus (strain 82-40)</name>
    <dbReference type="NCBI Taxonomy" id="360106"/>
    <lineage>
        <taxon>Bacteria</taxon>
        <taxon>Pseudomonadati</taxon>
        <taxon>Campylobacterota</taxon>
        <taxon>Epsilonproteobacteria</taxon>
        <taxon>Campylobacterales</taxon>
        <taxon>Campylobacteraceae</taxon>
        <taxon>Campylobacter</taxon>
    </lineage>
</organism>
<feature type="chain" id="PRO_0000337714" description="Bifunctional protein GlmU">
    <location>
        <begin position="1"/>
        <end position="436"/>
    </location>
</feature>
<feature type="region of interest" description="Pyrophosphorylase" evidence="1">
    <location>
        <begin position="1"/>
        <end position="226"/>
    </location>
</feature>
<feature type="region of interest" description="Linker" evidence="1">
    <location>
        <begin position="227"/>
        <end position="247"/>
    </location>
</feature>
<feature type="region of interest" description="N-acetyltransferase" evidence="1">
    <location>
        <begin position="248"/>
        <end position="436"/>
    </location>
</feature>
<feature type="active site" description="Proton acceptor" evidence="1">
    <location>
        <position position="339"/>
    </location>
</feature>
<feature type="binding site" evidence="1">
    <location>
        <begin position="9"/>
        <end position="12"/>
    </location>
    <ligand>
        <name>UDP-N-acetyl-alpha-D-glucosamine</name>
        <dbReference type="ChEBI" id="CHEBI:57705"/>
    </ligand>
</feature>
<feature type="binding site" evidence="1">
    <location>
        <position position="23"/>
    </location>
    <ligand>
        <name>UDP-N-acetyl-alpha-D-glucosamine</name>
        <dbReference type="ChEBI" id="CHEBI:57705"/>
    </ligand>
</feature>
<feature type="binding site" evidence="1">
    <location>
        <position position="75"/>
    </location>
    <ligand>
        <name>UDP-N-acetyl-alpha-D-glucosamine</name>
        <dbReference type="ChEBI" id="CHEBI:57705"/>
    </ligand>
</feature>
<feature type="binding site" evidence="1">
    <location>
        <begin position="82"/>
        <end position="83"/>
    </location>
    <ligand>
        <name>UDP-N-acetyl-alpha-D-glucosamine</name>
        <dbReference type="ChEBI" id="CHEBI:57705"/>
    </ligand>
</feature>
<feature type="binding site" evidence="1">
    <location>
        <position position="105"/>
    </location>
    <ligand>
        <name>Mg(2+)</name>
        <dbReference type="ChEBI" id="CHEBI:18420"/>
    </ligand>
</feature>
<feature type="binding site" evidence="1">
    <location>
        <position position="138"/>
    </location>
    <ligand>
        <name>UDP-N-acetyl-alpha-D-glucosamine</name>
        <dbReference type="ChEBI" id="CHEBI:57705"/>
    </ligand>
</feature>
<feature type="binding site" evidence="1">
    <location>
        <position position="152"/>
    </location>
    <ligand>
        <name>UDP-N-acetyl-alpha-D-glucosamine</name>
        <dbReference type="ChEBI" id="CHEBI:57705"/>
    </ligand>
</feature>
<feature type="binding site" evidence="1">
    <location>
        <position position="167"/>
    </location>
    <ligand>
        <name>UDP-N-acetyl-alpha-D-glucosamine</name>
        <dbReference type="ChEBI" id="CHEBI:57705"/>
    </ligand>
</feature>
<feature type="binding site" evidence="1">
    <location>
        <position position="224"/>
    </location>
    <ligand>
        <name>Mg(2+)</name>
        <dbReference type="ChEBI" id="CHEBI:18420"/>
    </ligand>
</feature>
<feature type="binding site" evidence="1">
    <location>
        <position position="224"/>
    </location>
    <ligand>
        <name>UDP-N-acetyl-alpha-D-glucosamine</name>
        <dbReference type="ChEBI" id="CHEBI:57705"/>
    </ligand>
</feature>
<feature type="binding site" evidence="1">
    <location>
        <position position="311"/>
    </location>
    <ligand>
        <name>UDP-N-acetyl-alpha-D-glucosamine</name>
        <dbReference type="ChEBI" id="CHEBI:57705"/>
    </ligand>
</feature>
<feature type="binding site" evidence="1">
    <location>
        <position position="328"/>
    </location>
    <ligand>
        <name>UDP-N-acetyl-alpha-D-glucosamine</name>
        <dbReference type="ChEBI" id="CHEBI:57705"/>
    </ligand>
</feature>
<feature type="binding site" evidence="1">
    <location>
        <position position="342"/>
    </location>
    <ligand>
        <name>UDP-N-acetyl-alpha-D-glucosamine</name>
        <dbReference type="ChEBI" id="CHEBI:57705"/>
    </ligand>
</feature>
<feature type="binding site" evidence="1">
    <location>
        <position position="353"/>
    </location>
    <ligand>
        <name>UDP-N-acetyl-alpha-D-glucosamine</name>
        <dbReference type="ChEBI" id="CHEBI:57705"/>
    </ligand>
</feature>
<feature type="binding site" evidence="1">
    <location>
        <begin position="362"/>
        <end position="363"/>
    </location>
    <ligand>
        <name>acetyl-CoA</name>
        <dbReference type="ChEBI" id="CHEBI:57288"/>
    </ligand>
</feature>
<feature type="binding site" evidence="1">
    <location>
        <position position="381"/>
    </location>
    <ligand>
        <name>acetyl-CoA</name>
        <dbReference type="ChEBI" id="CHEBI:57288"/>
    </ligand>
</feature>
<feature type="binding site" evidence="1">
    <location>
        <position position="399"/>
    </location>
    <ligand>
        <name>acetyl-CoA</name>
        <dbReference type="ChEBI" id="CHEBI:57288"/>
    </ligand>
</feature>
<feature type="binding site" evidence="1">
    <location>
        <position position="416"/>
    </location>
    <ligand>
        <name>acetyl-CoA</name>
        <dbReference type="ChEBI" id="CHEBI:57288"/>
    </ligand>
</feature>
<comment type="function">
    <text evidence="1">Catalyzes the last two sequential reactions in the de novo biosynthetic pathway for UDP-N-acetylglucosamine (UDP-GlcNAc). The C-terminal domain catalyzes the transfer of acetyl group from acetyl coenzyme A to glucosamine-1-phosphate (GlcN-1-P) to produce N-acetylglucosamine-1-phosphate (GlcNAc-1-P), which is converted into UDP-GlcNAc by the transfer of uridine 5-monophosphate (from uridine 5-triphosphate), a reaction catalyzed by the N-terminal domain.</text>
</comment>
<comment type="catalytic activity">
    <reaction evidence="1">
        <text>alpha-D-glucosamine 1-phosphate + acetyl-CoA = N-acetyl-alpha-D-glucosamine 1-phosphate + CoA + H(+)</text>
        <dbReference type="Rhea" id="RHEA:13725"/>
        <dbReference type="ChEBI" id="CHEBI:15378"/>
        <dbReference type="ChEBI" id="CHEBI:57287"/>
        <dbReference type="ChEBI" id="CHEBI:57288"/>
        <dbReference type="ChEBI" id="CHEBI:57776"/>
        <dbReference type="ChEBI" id="CHEBI:58516"/>
        <dbReference type="EC" id="2.3.1.157"/>
    </reaction>
</comment>
<comment type="catalytic activity">
    <reaction evidence="1">
        <text>N-acetyl-alpha-D-glucosamine 1-phosphate + UTP + H(+) = UDP-N-acetyl-alpha-D-glucosamine + diphosphate</text>
        <dbReference type="Rhea" id="RHEA:13509"/>
        <dbReference type="ChEBI" id="CHEBI:15378"/>
        <dbReference type="ChEBI" id="CHEBI:33019"/>
        <dbReference type="ChEBI" id="CHEBI:46398"/>
        <dbReference type="ChEBI" id="CHEBI:57705"/>
        <dbReference type="ChEBI" id="CHEBI:57776"/>
        <dbReference type="EC" id="2.7.7.23"/>
    </reaction>
</comment>
<comment type="cofactor">
    <cofactor evidence="1">
        <name>Mg(2+)</name>
        <dbReference type="ChEBI" id="CHEBI:18420"/>
    </cofactor>
    <text evidence="1">Binds 1 Mg(2+) ion per subunit.</text>
</comment>
<comment type="pathway">
    <text evidence="1">Nucleotide-sugar biosynthesis; UDP-N-acetyl-alpha-D-glucosamine biosynthesis; N-acetyl-alpha-D-glucosamine 1-phosphate from alpha-D-glucosamine 6-phosphate (route II): step 2/2.</text>
</comment>
<comment type="pathway">
    <text evidence="1">Nucleotide-sugar biosynthesis; UDP-N-acetyl-alpha-D-glucosamine biosynthesis; UDP-N-acetyl-alpha-D-glucosamine from N-acetyl-alpha-D-glucosamine 1-phosphate: step 1/1.</text>
</comment>
<comment type="pathway">
    <text evidence="1">Bacterial outer membrane biogenesis; LPS lipid A biosynthesis.</text>
</comment>
<comment type="subunit">
    <text evidence="1">Homotrimer.</text>
</comment>
<comment type="subcellular location">
    <subcellularLocation>
        <location evidence="1">Cytoplasm</location>
    </subcellularLocation>
</comment>
<comment type="similarity">
    <text evidence="1">In the N-terminal section; belongs to the N-acetylglucosamine-1-phosphate uridyltransferase family.</text>
</comment>
<comment type="similarity">
    <text evidence="1">In the C-terminal section; belongs to the transferase hexapeptide repeat family.</text>
</comment>
<sequence length="436" mass="48104">MNEISIIILAAGNGTRMKSNKSKVLHTLCGEPMISHILKKSYEISNDVRIVLSYQFEEVKNSVLSEFKDVKIYKQDTINRPGTAGAAEAALENLNSKKTLVICGDMPLVEVNELKSLCDNTADISLSAFRAKNPFGYGRVVLNQQNVIKIVEQKDANDDEKKIDLCNAGAYCFDTNLLKNIIPLIKNENASREFYLTDAIELALKQGFMVKSVLVDETNFMGINDKFALSIAEEIMQNRIKENLMKNGVIMSLPDTIFIDSRAEFEGECKLEPNVVILGNSFIKNSHIKSGSVIEFSEVCDSDIGPMAHLRPNSKIYKTHIGNFVELKNASLNEVKAGHLSYLGDCEINSGTNIGCGTITCNYDGKKKHKTIIGKNVFIGSDTQLVAPVNVADDTLIAAGSTVTKDTNKGDLVITRGKQINKAGYFYKFFGKNDEK</sequence>
<gene>
    <name evidence="1" type="primary">glmU</name>
    <name type="ordered locus">CFF8240_0753</name>
</gene>
<protein>
    <recommendedName>
        <fullName evidence="1">Bifunctional protein GlmU</fullName>
    </recommendedName>
    <domain>
        <recommendedName>
            <fullName evidence="1">UDP-N-acetylglucosamine pyrophosphorylase</fullName>
            <ecNumber evidence="1">2.7.7.23</ecNumber>
        </recommendedName>
        <alternativeName>
            <fullName evidence="1">N-acetylglucosamine-1-phosphate uridyltransferase</fullName>
        </alternativeName>
    </domain>
    <domain>
        <recommendedName>
            <fullName evidence="1">Glucosamine-1-phosphate N-acetyltransferase</fullName>
            <ecNumber evidence="1">2.3.1.157</ecNumber>
        </recommendedName>
    </domain>
</protein>
<dbReference type="EC" id="2.7.7.23" evidence="1"/>
<dbReference type="EC" id="2.3.1.157" evidence="1"/>
<dbReference type="EMBL" id="CP000487">
    <property type="protein sequence ID" value="ABK81994.1"/>
    <property type="molecule type" value="Genomic_DNA"/>
</dbReference>
<dbReference type="RefSeq" id="WP_011731939.1">
    <property type="nucleotide sequence ID" value="NC_008599.1"/>
</dbReference>
<dbReference type="SMR" id="A0RNZ5"/>
<dbReference type="GeneID" id="61064592"/>
<dbReference type="KEGG" id="cff:CFF8240_0753"/>
<dbReference type="eggNOG" id="COG1207">
    <property type="taxonomic scope" value="Bacteria"/>
</dbReference>
<dbReference type="HOGENOM" id="CLU_029499_15_2_7"/>
<dbReference type="UniPathway" id="UPA00113">
    <property type="reaction ID" value="UER00532"/>
</dbReference>
<dbReference type="UniPathway" id="UPA00113">
    <property type="reaction ID" value="UER00533"/>
</dbReference>
<dbReference type="UniPathway" id="UPA00973"/>
<dbReference type="Proteomes" id="UP000000760">
    <property type="component" value="Chromosome"/>
</dbReference>
<dbReference type="GO" id="GO:0005737">
    <property type="term" value="C:cytoplasm"/>
    <property type="evidence" value="ECO:0007669"/>
    <property type="project" value="UniProtKB-SubCell"/>
</dbReference>
<dbReference type="GO" id="GO:0016020">
    <property type="term" value="C:membrane"/>
    <property type="evidence" value="ECO:0007669"/>
    <property type="project" value="GOC"/>
</dbReference>
<dbReference type="GO" id="GO:0019134">
    <property type="term" value="F:glucosamine-1-phosphate N-acetyltransferase activity"/>
    <property type="evidence" value="ECO:0007669"/>
    <property type="project" value="UniProtKB-UniRule"/>
</dbReference>
<dbReference type="GO" id="GO:0000287">
    <property type="term" value="F:magnesium ion binding"/>
    <property type="evidence" value="ECO:0007669"/>
    <property type="project" value="UniProtKB-UniRule"/>
</dbReference>
<dbReference type="GO" id="GO:0003977">
    <property type="term" value="F:UDP-N-acetylglucosamine diphosphorylase activity"/>
    <property type="evidence" value="ECO:0007669"/>
    <property type="project" value="UniProtKB-UniRule"/>
</dbReference>
<dbReference type="GO" id="GO:0000902">
    <property type="term" value="P:cell morphogenesis"/>
    <property type="evidence" value="ECO:0007669"/>
    <property type="project" value="UniProtKB-UniRule"/>
</dbReference>
<dbReference type="GO" id="GO:0071555">
    <property type="term" value="P:cell wall organization"/>
    <property type="evidence" value="ECO:0007669"/>
    <property type="project" value="UniProtKB-KW"/>
</dbReference>
<dbReference type="GO" id="GO:0009245">
    <property type="term" value="P:lipid A biosynthetic process"/>
    <property type="evidence" value="ECO:0007669"/>
    <property type="project" value="UniProtKB-UniRule"/>
</dbReference>
<dbReference type="GO" id="GO:0009252">
    <property type="term" value="P:peptidoglycan biosynthetic process"/>
    <property type="evidence" value="ECO:0007669"/>
    <property type="project" value="UniProtKB-UniRule"/>
</dbReference>
<dbReference type="GO" id="GO:0008360">
    <property type="term" value="P:regulation of cell shape"/>
    <property type="evidence" value="ECO:0007669"/>
    <property type="project" value="UniProtKB-KW"/>
</dbReference>
<dbReference type="GO" id="GO:0006048">
    <property type="term" value="P:UDP-N-acetylglucosamine biosynthetic process"/>
    <property type="evidence" value="ECO:0007669"/>
    <property type="project" value="UniProtKB-UniPathway"/>
</dbReference>
<dbReference type="CDD" id="cd02540">
    <property type="entry name" value="GT2_GlmU_N_bac"/>
    <property type="match status" value="1"/>
</dbReference>
<dbReference type="CDD" id="cd03353">
    <property type="entry name" value="LbH_GlmU_C"/>
    <property type="match status" value="1"/>
</dbReference>
<dbReference type="Gene3D" id="2.160.10.10">
    <property type="entry name" value="Hexapeptide repeat proteins"/>
    <property type="match status" value="1"/>
</dbReference>
<dbReference type="Gene3D" id="3.90.550.10">
    <property type="entry name" value="Spore Coat Polysaccharide Biosynthesis Protein SpsA, Chain A"/>
    <property type="match status" value="1"/>
</dbReference>
<dbReference type="HAMAP" id="MF_01631">
    <property type="entry name" value="GlmU"/>
    <property type="match status" value="1"/>
</dbReference>
<dbReference type="InterPro" id="IPR005882">
    <property type="entry name" value="Bifunctional_GlmU"/>
</dbReference>
<dbReference type="InterPro" id="IPR050065">
    <property type="entry name" value="GlmU-like"/>
</dbReference>
<dbReference type="InterPro" id="IPR038009">
    <property type="entry name" value="GlmU_C_LbH"/>
</dbReference>
<dbReference type="InterPro" id="IPR001451">
    <property type="entry name" value="Hexapep"/>
</dbReference>
<dbReference type="InterPro" id="IPR025877">
    <property type="entry name" value="MobA-like_NTP_Trfase"/>
</dbReference>
<dbReference type="InterPro" id="IPR029044">
    <property type="entry name" value="Nucleotide-diphossugar_trans"/>
</dbReference>
<dbReference type="InterPro" id="IPR011004">
    <property type="entry name" value="Trimer_LpxA-like_sf"/>
</dbReference>
<dbReference type="NCBIfam" id="TIGR01173">
    <property type="entry name" value="glmU"/>
    <property type="match status" value="1"/>
</dbReference>
<dbReference type="NCBIfam" id="NF010939">
    <property type="entry name" value="PRK14359.1"/>
    <property type="match status" value="1"/>
</dbReference>
<dbReference type="PANTHER" id="PTHR43584:SF3">
    <property type="entry name" value="BIFUNCTIONAL PROTEIN GLMU"/>
    <property type="match status" value="1"/>
</dbReference>
<dbReference type="PANTHER" id="PTHR43584">
    <property type="entry name" value="NUCLEOTIDYL TRANSFERASE"/>
    <property type="match status" value="1"/>
</dbReference>
<dbReference type="Pfam" id="PF00132">
    <property type="entry name" value="Hexapep"/>
    <property type="match status" value="1"/>
</dbReference>
<dbReference type="Pfam" id="PF12804">
    <property type="entry name" value="NTP_transf_3"/>
    <property type="match status" value="1"/>
</dbReference>
<dbReference type="SUPFAM" id="SSF53448">
    <property type="entry name" value="Nucleotide-diphospho-sugar transferases"/>
    <property type="match status" value="1"/>
</dbReference>
<dbReference type="SUPFAM" id="SSF51161">
    <property type="entry name" value="Trimeric LpxA-like enzymes"/>
    <property type="match status" value="1"/>
</dbReference>
<name>GLMU_CAMFF</name>
<evidence type="ECO:0000255" key="1">
    <source>
        <dbReference type="HAMAP-Rule" id="MF_01631"/>
    </source>
</evidence>
<keyword id="KW-0012">Acyltransferase</keyword>
<keyword id="KW-0133">Cell shape</keyword>
<keyword id="KW-0961">Cell wall biogenesis/degradation</keyword>
<keyword id="KW-0963">Cytoplasm</keyword>
<keyword id="KW-0460">Magnesium</keyword>
<keyword id="KW-0479">Metal-binding</keyword>
<keyword id="KW-0511">Multifunctional enzyme</keyword>
<keyword id="KW-0548">Nucleotidyltransferase</keyword>
<keyword id="KW-0573">Peptidoglycan synthesis</keyword>
<keyword id="KW-0677">Repeat</keyword>
<keyword id="KW-0808">Transferase</keyword>
<proteinExistence type="inferred from homology"/>
<accession>A0RNZ5</accession>
<reference key="1">
    <citation type="submission" date="2006-11" db="EMBL/GenBank/DDBJ databases">
        <title>Sequence of Campylobacter fetus subsp. fetus 82-40.</title>
        <authorList>
            <person name="Fouts D.E."/>
            <person name="Nelson K.E."/>
        </authorList>
    </citation>
    <scope>NUCLEOTIDE SEQUENCE [LARGE SCALE GENOMIC DNA]</scope>
    <source>
        <strain>82-40</strain>
    </source>
</reference>